<name>ENLYS_BPA51</name>
<reference key="1">
    <citation type="journal article" date="1995" name="Mol. Microbiol.">
        <title>Heterogeneous endolysins in Listeria monocytogenes bacteriophages: a new class of enzymes and evidence for conserved holin genes within the siphoviral lysis cassettes.</title>
        <authorList>
            <person name="Loessner M.J."/>
            <person name="Wendlinger G."/>
            <person name="Scherer S."/>
        </authorList>
    </citation>
    <scope>NUCLEOTIDE SEQUENCE [GENOMIC DNA]</scope>
</reference>
<comment type="catalytic activity">
    <reaction>
        <text>Hydrolyzes the link between N-acetylmuramoyl residues and L-amino acid residues in certain cell-wall glycopeptides.</text>
        <dbReference type="EC" id="3.5.1.28"/>
    </reaction>
</comment>
<comment type="subcellular location">
    <subcellularLocation>
        <location evidence="3">Secreted</location>
    </subcellularLocation>
</comment>
<comment type="developmental stage">
    <text>Expressed at about 20 minutes after infection.</text>
</comment>
<comment type="similarity">
    <text evidence="3">Belongs to the N-acetylmuramoyl-L-alanine amidase 2 family.</text>
</comment>
<proteinExistence type="evidence at transcript level"/>
<accession>Q38653</accession>
<protein>
    <recommendedName>
        <fullName>Endolysin</fullName>
        <ecNumber>3.5.1.28</ecNumber>
    </recommendedName>
    <alternativeName>
        <fullName>Probable N-acetylmuramoyl-L-alanine amidase</fullName>
    </alternativeName>
</protein>
<keyword id="KW-0929">Antimicrobial</keyword>
<keyword id="KW-0081">Bacteriolytic enzyme</keyword>
<keyword id="KW-0378">Hydrolase</keyword>
<keyword id="KW-0677">Repeat</keyword>
<keyword id="KW-0964">Secreted</keyword>
<organism>
    <name type="scientific">Listeria phage A511</name>
    <name type="common">Bacteriophage A511</name>
    <dbReference type="NCBI Taxonomy" id="40523"/>
    <lineage>
        <taxon>Viruses</taxon>
        <taxon>Duplodnaviria</taxon>
        <taxon>Heunggongvirae</taxon>
        <taxon>Uroviricota</taxon>
        <taxon>Caudoviricetes</taxon>
        <taxon>Herelleviridae</taxon>
        <taxon>Jasinkavirinae</taxon>
        <taxon>Pecentumvirus</taxon>
    </lineage>
</organism>
<feature type="chain" id="PRO_0000164405" description="Endolysin">
    <location>
        <begin position="1"/>
        <end position="341"/>
    </location>
</feature>
<feature type="domain" description="N-acetylmuramoyl-L-alanine amidase" evidence="1">
    <location>
        <begin position="23"/>
        <end position="153"/>
    </location>
</feature>
<feature type="region of interest" description="Disordered" evidence="2">
    <location>
        <begin position="175"/>
        <end position="201"/>
    </location>
</feature>
<feature type="region of interest" description="Disordered" evidence="2">
    <location>
        <begin position="248"/>
        <end position="267"/>
    </location>
</feature>
<gene>
    <name type="primary">PLY511</name>
</gene>
<sequence length="341" mass="36477">MVKYTVENKIIAGLPKGKLKGANFVIAHETANSKSTIDNEVSYMTRNWKNAFVTHFVGGGGRVVQVANVNYVSWGAGQYANSYSYAQVELCRTSNATTFKKDYEVYCQLLVDLAKKAGIPITLDSGSKTSDKGIKSHKWVADKLGGTTHQDPYAYLSSWGISKAQFASDLAKVSGGGNTGTAPAKPSTPAPKPSTPSTNLDKLGLVDYMNAKKMDSSYSNRDKLAKQYGIANYSGTASQNTTLLSKIKGGAPKPSTPAPKPSTSTAKKIYFPPNKGNWSVYPTNKAPVKANAIGAINPTKFGGLTYTIQKDRGNGVYEIQTDQFGRVQVYGAPSTGAVIKK</sequence>
<evidence type="ECO:0000255" key="1"/>
<evidence type="ECO:0000256" key="2">
    <source>
        <dbReference type="SAM" id="MobiDB-lite"/>
    </source>
</evidence>
<evidence type="ECO:0000305" key="3"/>
<dbReference type="EC" id="3.5.1.28"/>
<dbReference type="EMBL" id="X85010">
    <property type="protein sequence ID" value="CAA59368.1"/>
    <property type="molecule type" value="Genomic_DNA"/>
</dbReference>
<dbReference type="PIR" id="S69802">
    <property type="entry name" value="S69802"/>
</dbReference>
<dbReference type="SMR" id="Q38653"/>
<dbReference type="MEROPS" id="M15.950"/>
<dbReference type="KEGG" id="vg:5601499"/>
<dbReference type="GO" id="GO:0005576">
    <property type="term" value="C:extracellular region"/>
    <property type="evidence" value="ECO:0007669"/>
    <property type="project" value="UniProtKB-SubCell"/>
</dbReference>
<dbReference type="GO" id="GO:0008745">
    <property type="term" value="F:N-acetylmuramoyl-L-alanine amidase activity"/>
    <property type="evidence" value="ECO:0007669"/>
    <property type="project" value="UniProtKB-EC"/>
</dbReference>
<dbReference type="GO" id="GO:0042742">
    <property type="term" value="P:defense response to bacterium"/>
    <property type="evidence" value="ECO:0007669"/>
    <property type="project" value="UniProtKB-KW"/>
</dbReference>
<dbReference type="GO" id="GO:0009253">
    <property type="term" value="P:peptidoglycan catabolic process"/>
    <property type="evidence" value="ECO:0007669"/>
    <property type="project" value="InterPro"/>
</dbReference>
<dbReference type="GO" id="GO:0001897">
    <property type="term" value="P:symbiont-mediated cytolysis of host cell"/>
    <property type="evidence" value="ECO:0007669"/>
    <property type="project" value="UniProtKB-ARBA"/>
</dbReference>
<dbReference type="CDD" id="cd06583">
    <property type="entry name" value="PGRP"/>
    <property type="match status" value="1"/>
</dbReference>
<dbReference type="Gene3D" id="3.40.80.10">
    <property type="entry name" value="Peptidoglycan recognition protein-like"/>
    <property type="match status" value="1"/>
</dbReference>
<dbReference type="InterPro" id="IPR036505">
    <property type="entry name" value="Amidase/PGRP_sf"/>
</dbReference>
<dbReference type="InterPro" id="IPR002502">
    <property type="entry name" value="Amidase_domain"/>
</dbReference>
<dbReference type="Pfam" id="PF01510">
    <property type="entry name" value="Amidase_2"/>
    <property type="match status" value="1"/>
</dbReference>
<dbReference type="SMART" id="SM00644">
    <property type="entry name" value="Ami_2"/>
    <property type="match status" value="1"/>
</dbReference>
<dbReference type="SUPFAM" id="SSF55846">
    <property type="entry name" value="N-acetylmuramoyl-L-alanine amidase-like"/>
    <property type="match status" value="1"/>
</dbReference>
<dbReference type="SUPFAM" id="SSF158634">
    <property type="entry name" value="RPA2825-like"/>
    <property type="match status" value="1"/>
</dbReference>
<organismHost>
    <name type="scientific">Listeria monocytogenes</name>
    <dbReference type="NCBI Taxonomy" id="1639"/>
</organismHost>